<name>G6PD_CRIGR</name>
<feature type="initiator methionine" description="Removed" evidence="2">
    <location>
        <position position="1"/>
    </location>
</feature>
<feature type="chain" id="PRO_0000068081" description="Glucose-6-phosphate 1-dehydrogenase">
    <location>
        <begin position="2"/>
        <end position="515"/>
    </location>
</feature>
<feature type="active site" description="Proton acceptor" evidence="1">
    <location>
        <position position="263"/>
    </location>
</feature>
<feature type="binding site" evidence="2">
    <location>
        <begin position="38"/>
        <end position="45"/>
    </location>
    <ligand>
        <name>NADP(+)</name>
        <dbReference type="ChEBI" id="CHEBI:58349"/>
        <label>1</label>
    </ligand>
</feature>
<feature type="binding site" evidence="2">
    <location>
        <position position="72"/>
    </location>
    <ligand>
        <name>NADP(+)</name>
        <dbReference type="ChEBI" id="CHEBI:58349"/>
        <label>1</label>
    </ligand>
</feature>
<feature type="binding site" evidence="2">
    <location>
        <position position="147"/>
    </location>
    <ligand>
        <name>NADP(+)</name>
        <dbReference type="ChEBI" id="CHEBI:58349"/>
        <label>1</label>
    </ligand>
</feature>
<feature type="binding site" evidence="2">
    <location>
        <position position="171"/>
    </location>
    <ligand>
        <name>D-glucose 6-phosphate</name>
        <dbReference type="ChEBI" id="CHEBI:61548"/>
    </ligand>
</feature>
<feature type="binding site" evidence="2">
    <location>
        <position position="171"/>
    </location>
    <ligand>
        <name>NADP(+)</name>
        <dbReference type="ChEBI" id="CHEBI:58349"/>
        <label>1</label>
    </ligand>
</feature>
<feature type="binding site" evidence="2">
    <location>
        <begin position="201"/>
        <end position="205"/>
    </location>
    <ligand>
        <name>D-glucose 6-phosphate</name>
        <dbReference type="ChEBI" id="CHEBI:61548"/>
    </ligand>
</feature>
<feature type="binding site" evidence="2">
    <location>
        <position position="239"/>
    </location>
    <ligand>
        <name>D-glucose 6-phosphate</name>
        <dbReference type="ChEBI" id="CHEBI:61548"/>
    </ligand>
</feature>
<feature type="binding site" evidence="2">
    <location>
        <position position="258"/>
    </location>
    <ligand>
        <name>D-glucose 6-phosphate</name>
        <dbReference type="ChEBI" id="CHEBI:61548"/>
    </ligand>
</feature>
<feature type="binding site" evidence="2">
    <location>
        <position position="357"/>
    </location>
    <ligand>
        <name>NADP(+)</name>
        <dbReference type="ChEBI" id="CHEBI:58349"/>
        <label>2</label>
    </ligand>
</feature>
<feature type="binding site" evidence="2">
    <location>
        <position position="360"/>
    </location>
    <ligand>
        <name>D-glucose 6-phosphate</name>
        <dbReference type="ChEBI" id="CHEBI:61548"/>
    </ligand>
</feature>
<feature type="binding site" evidence="2">
    <location>
        <position position="365"/>
    </location>
    <ligand>
        <name>D-glucose 6-phosphate</name>
        <dbReference type="ChEBI" id="CHEBI:61548"/>
    </ligand>
</feature>
<feature type="binding site" evidence="2">
    <location>
        <position position="366"/>
    </location>
    <ligand>
        <name>NADP(+)</name>
        <dbReference type="ChEBI" id="CHEBI:58349"/>
        <label>2</label>
    </ligand>
</feature>
<feature type="binding site" evidence="2">
    <location>
        <position position="370"/>
    </location>
    <ligand>
        <name>NADP(+)</name>
        <dbReference type="ChEBI" id="CHEBI:58349"/>
        <label>2</label>
    </ligand>
</feature>
<feature type="binding site" evidence="2">
    <location>
        <position position="393"/>
    </location>
    <ligand>
        <name>NADP(+)</name>
        <dbReference type="ChEBI" id="CHEBI:58349"/>
        <label>2</label>
    </ligand>
</feature>
<feature type="binding site" evidence="2">
    <location>
        <position position="395"/>
    </location>
    <ligand>
        <name>D-glucose 6-phosphate</name>
        <dbReference type="ChEBI" id="CHEBI:61548"/>
    </ligand>
</feature>
<feature type="binding site" evidence="2">
    <location>
        <begin position="401"/>
        <end position="403"/>
    </location>
    <ligand>
        <name>NADP(+)</name>
        <dbReference type="ChEBI" id="CHEBI:58349"/>
        <label>2</label>
    </ligand>
</feature>
<feature type="binding site" evidence="2">
    <location>
        <begin position="421"/>
        <end position="423"/>
    </location>
    <ligand>
        <name>NADP(+)</name>
        <dbReference type="ChEBI" id="CHEBI:58349"/>
        <label>2</label>
    </ligand>
</feature>
<feature type="binding site" evidence="2">
    <location>
        <position position="487"/>
    </location>
    <ligand>
        <name>NADP(+)</name>
        <dbReference type="ChEBI" id="CHEBI:58349"/>
        <label>2</label>
    </ligand>
</feature>
<feature type="binding site" evidence="2">
    <location>
        <position position="503"/>
    </location>
    <ligand>
        <name>NADP(+)</name>
        <dbReference type="ChEBI" id="CHEBI:58349"/>
        <label>2</label>
    </ligand>
</feature>
<feature type="binding site" evidence="2">
    <location>
        <position position="509"/>
    </location>
    <ligand>
        <name>NADP(+)</name>
        <dbReference type="ChEBI" id="CHEBI:58349"/>
        <label>2</label>
    </ligand>
</feature>
<feature type="modified residue" description="N-acetylalanine" evidence="2">
    <location>
        <position position="2"/>
    </location>
</feature>
<feature type="modified residue" description="Phosphoserine" evidence="2">
    <location>
        <position position="8"/>
    </location>
</feature>
<feature type="modified residue" description="Phosphothreonine" evidence="2">
    <location>
        <position position="10"/>
    </location>
</feature>
<feature type="modified residue" description="N6-acetyllysine" evidence="2">
    <location>
        <position position="89"/>
    </location>
</feature>
<feature type="modified residue" description="N6-(2-hydroxyisobutyryl)lysine; alternate" evidence="2">
    <location>
        <position position="171"/>
    </location>
</feature>
<feature type="modified residue" description="N6-acetyllysine; alternate" evidence="2">
    <location>
        <position position="171"/>
    </location>
</feature>
<feature type="modified residue" description="N6-acetyllysine" evidence="2">
    <location>
        <position position="403"/>
    </location>
</feature>
<feature type="modified residue" description="N6-acetyllysine" evidence="2">
    <location>
        <position position="432"/>
    </location>
</feature>
<feature type="modified residue" description="N6-acetyllysine" evidence="2">
    <location>
        <position position="497"/>
    </location>
</feature>
<feature type="modified residue" description="Phosphotyrosine" evidence="2">
    <location>
        <position position="503"/>
    </location>
</feature>
<protein>
    <recommendedName>
        <fullName>Glucose-6-phosphate 1-dehydrogenase</fullName>
        <shortName>G6PD</shortName>
        <ecNumber evidence="2">1.1.1.49</ecNumber>
    </recommendedName>
</protein>
<evidence type="ECO:0000250" key="1">
    <source>
        <dbReference type="UniProtKB" id="P11411"/>
    </source>
</evidence>
<evidence type="ECO:0000250" key="2">
    <source>
        <dbReference type="UniProtKB" id="P11413"/>
    </source>
</evidence>
<evidence type="ECO:0000305" key="3"/>
<keyword id="KW-0007">Acetylation</keyword>
<keyword id="KW-0119">Carbohydrate metabolism</keyword>
<keyword id="KW-0963">Cytoplasm</keyword>
<keyword id="KW-0313">Glucose metabolism</keyword>
<keyword id="KW-0379">Hydroxylation</keyword>
<keyword id="KW-0472">Membrane</keyword>
<keyword id="KW-0521">NADP</keyword>
<keyword id="KW-0560">Oxidoreductase</keyword>
<keyword id="KW-0597">Phosphoprotein</keyword>
<sequence length="515" mass="59326">MAEQVALSRTQVCGILREELYQGDAFHQADTHIFIIMGASGDLAKKKIYPTIWWLFRDGLLPEDTFIVGYARSRLTVDDIRKQSEPFFKATPEERPKLEEFFARNSYVAGQYDDPASYKHLNSHMNALHQGMQANRLFYLALPPTVYEAVTKNIQETCMSQTGWNRIIVEKPFGRDLQSSNQLSNHISSLFREDQIYRIDHYLGKEMVQNLMVLRFANRIFGPIWNRDNIACVILTFKEPFGTEGRGGYFDEFGIIRDVMQNHLLQMLCLVAMEKPASTDSDDVRDEKVKVLKCISEVETSNVVLGQYVGNPNGEGEATNGYLDDPTVPRGSTTATFAAAVLYVENERWDGVPFILRCGKALNERKAEVRLQFRDVAGDIFHQQCKRNELVIRVQPNEAVYTKMMTKKPGMFFNPEESELDLTYGNRYKNVKLPDAYERLILDVFCGSQMHFVRSDELREAWRIFTPLLHKIDQEKPQPIPYVYGSRGPTEADELMKRVGFQYEGTYKWVNPHKL</sequence>
<reference key="1">
    <citation type="submission" date="1998-01" db="EMBL/GenBank/DDBJ databases">
        <title>cDNA sequence of Chinese hamster glucose-6-phosphate Dehydrogenase.</title>
        <authorList>
            <person name="Perez M.L."/>
            <person name="Stamato T.D."/>
        </authorList>
    </citation>
    <scope>NUCLEOTIDE SEQUENCE [MRNA]</scope>
    <source>
        <tissue>Ovary</tissue>
    </source>
</reference>
<comment type="function">
    <text evidence="2">Cytosolic glucose-6-phosphate dehydrogenase that catalyzes the first and rate-limiting step of the oxidative branch within the pentose phosphate pathway/shunt, an alternative route to glycolysis for the dissimilation of carbohydrates and a major source of reducing power and metabolic intermediates for fatty acid and nucleic acid biosynthetic processes.</text>
</comment>
<comment type="catalytic activity">
    <reaction evidence="2">
        <text>D-glucose 6-phosphate + NADP(+) = 6-phospho-D-glucono-1,5-lactone + NADPH + H(+)</text>
        <dbReference type="Rhea" id="RHEA:15841"/>
        <dbReference type="ChEBI" id="CHEBI:15378"/>
        <dbReference type="ChEBI" id="CHEBI:57783"/>
        <dbReference type="ChEBI" id="CHEBI:57955"/>
        <dbReference type="ChEBI" id="CHEBI:58349"/>
        <dbReference type="ChEBI" id="CHEBI:61548"/>
        <dbReference type="EC" id="1.1.1.49"/>
    </reaction>
    <physiologicalReaction direction="left-to-right" evidence="2">
        <dbReference type="Rhea" id="RHEA:15842"/>
    </physiologicalReaction>
</comment>
<comment type="pathway">
    <text evidence="2">Carbohydrate degradation; pentose phosphate pathway; D-ribulose 5-phosphate from D-glucose 6-phosphate (oxidative stage): step 1/3.</text>
</comment>
<comment type="subunit">
    <text evidence="2">Homotetramer; dimer of dimers. Interacts with SIRT2; the interaction is enhanced by H(2)O(2) treatment (By similarity). Forms a ternary complex with ALDOB and TP53; this interaction is direct. ALDOB stabilizes the complex inhibiting G6PD activity and keeping oxidative pentose phosphate metabolism in check.</text>
</comment>
<comment type="subcellular location">
    <subcellularLocation>
        <location evidence="2">Cytoplasm</location>
        <location evidence="2">Cytosol</location>
    </subcellularLocation>
    <subcellularLocation>
        <location evidence="2">Membrane</location>
        <topology evidence="2">Peripheral membrane protein</topology>
    </subcellularLocation>
</comment>
<comment type="PTM">
    <text evidence="2">Acetylated by ELP3 at Lys-403; acetylation inhibits its homodimerization and enzyme activity. Deacetylated by SIRT2 at Lys-403; deacetylation stimulates its enzyme activity (By similarity).</text>
</comment>
<comment type="similarity">
    <text evidence="3">Belongs to the glucose-6-phosphate dehydrogenase family.</text>
</comment>
<accession>O55044</accession>
<organism>
    <name type="scientific">Cricetulus griseus</name>
    <name type="common">Chinese hamster</name>
    <name type="synonym">Cricetulus barabensis griseus</name>
    <dbReference type="NCBI Taxonomy" id="10029"/>
    <lineage>
        <taxon>Eukaryota</taxon>
        <taxon>Metazoa</taxon>
        <taxon>Chordata</taxon>
        <taxon>Craniata</taxon>
        <taxon>Vertebrata</taxon>
        <taxon>Euteleostomi</taxon>
        <taxon>Mammalia</taxon>
        <taxon>Eutheria</taxon>
        <taxon>Euarchontoglires</taxon>
        <taxon>Glires</taxon>
        <taxon>Rodentia</taxon>
        <taxon>Myomorpha</taxon>
        <taxon>Muroidea</taxon>
        <taxon>Cricetidae</taxon>
        <taxon>Cricetinae</taxon>
        <taxon>Cricetulus</taxon>
    </lineage>
</organism>
<dbReference type="EC" id="1.1.1.49" evidence="2"/>
<dbReference type="EMBL" id="AF044676">
    <property type="protein sequence ID" value="AAC00204.1"/>
    <property type="molecule type" value="mRNA"/>
</dbReference>
<dbReference type="RefSeq" id="NP_001233656.1">
    <property type="nucleotide sequence ID" value="NM_001246727.1"/>
</dbReference>
<dbReference type="SMR" id="O55044"/>
<dbReference type="PaxDb" id="10029-NP_001233656.1"/>
<dbReference type="Ensembl" id="ENSCGRT00001011414.1">
    <property type="protein sequence ID" value="ENSCGRP00001007382.1"/>
    <property type="gene ID" value="ENSCGRG00001009805.1"/>
</dbReference>
<dbReference type="GeneID" id="100689469"/>
<dbReference type="KEGG" id="cge:100689469"/>
<dbReference type="CTD" id="2539"/>
<dbReference type="eggNOG" id="KOG0563">
    <property type="taxonomic scope" value="Eukaryota"/>
</dbReference>
<dbReference type="GeneTree" id="ENSGT00530000063435"/>
<dbReference type="OrthoDB" id="60984at2759"/>
<dbReference type="UniPathway" id="UPA00115">
    <property type="reaction ID" value="UER00408"/>
</dbReference>
<dbReference type="Proteomes" id="UP000694386">
    <property type="component" value="Unplaced"/>
</dbReference>
<dbReference type="Proteomes" id="UP001108280">
    <property type="component" value="Chromosome X"/>
</dbReference>
<dbReference type="GO" id="GO:0034451">
    <property type="term" value="C:centriolar satellite"/>
    <property type="evidence" value="ECO:0007669"/>
    <property type="project" value="Ensembl"/>
</dbReference>
<dbReference type="GO" id="GO:0009898">
    <property type="term" value="C:cytoplasmic side of plasma membrane"/>
    <property type="evidence" value="ECO:0007669"/>
    <property type="project" value="Ensembl"/>
</dbReference>
<dbReference type="GO" id="GO:0005829">
    <property type="term" value="C:cytosol"/>
    <property type="evidence" value="ECO:0007669"/>
    <property type="project" value="UniProtKB-SubCell"/>
</dbReference>
<dbReference type="GO" id="GO:0043231">
    <property type="term" value="C:intracellular membrane-bounded organelle"/>
    <property type="evidence" value="ECO:0007669"/>
    <property type="project" value="Ensembl"/>
</dbReference>
<dbReference type="GO" id="GO:0005536">
    <property type="term" value="F:D-glucose binding"/>
    <property type="evidence" value="ECO:0007669"/>
    <property type="project" value="Ensembl"/>
</dbReference>
<dbReference type="GO" id="GO:0004345">
    <property type="term" value="F:glucose-6-phosphate dehydrogenase activity"/>
    <property type="evidence" value="ECO:0000250"/>
    <property type="project" value="UniProtKB"/>
</dbReference>
<dbReference type="GO" id="GO:0050661">
    <property type="term" value="F:NADP binding"/>
    <property type="evidence" value="ECO:0007669"/>
    <property type="project" value="Ensembl"/>
</dbReference>
<dbReference type="GO" id="GO:0042803">
    <property type="term" value="F:protein homodimerization activity"/>
    <property type="evidence" value="ECO:0007669"/>
    <property type="project" value="Ensembl"/>
</dbReference>
<dbReference type="GO" id="GO:0034599">
    <property type="term" value="P:cellular response to oxidative stress"/>
    <property type="evidence" value="ECO:0007669"/>
    <property type="project" value="Ensembl"/>
</dbReference>
<dbReference type="GO" id="GO:0006695">
    <property type="term" value="P:cholesterol biosynthetic process"/>
    <property type="evidence" value="ECO:0007669"/>
    <property type="project" value="Ensembl"/>
</dbReference>
<dbReference type="GO" id="GO:0043249">
    <property type="term" value="P:erythrocyte maturation"/>
    <property type="evidence" value="ECO:0007669"/>
    <property type="project" value="Ensembl"/>
</dbReference>
<dbReference type="GO" id="GO:0051156">
    <property type="term" value="P:glucose 6-phosphate metabolic process"/>
    <property type="evidence" value="ECO:0000250"/>
    <property type="project" value="UniProtKB"/>
</dbReference>
<dbReference type="GO" id="GO:0006006">
    <property type="term" value="P:glucose metabolic process"/>
    <property type="evidence" value="ECO:0007669"/>
    <property type="project" value="UniProtKB-KW"/>
</dbReference>
<dbReference type="GO" id="GO:0006749">
    <property type="term" value="P:glutathione metabolic process"/>
    <property type="evidence" value="ECO:0007669"/>
    <property type="project" value="Ensembl"/>
</dbReference>
<dbReference type="GO" id="GO:0006739">
    <property type="term" value="P:NADP metabolic process"/>
    <property type="evidence" value="ECO:0000250"/>
    <property type="project" value="UniProtKB"/>
</dbReference>
<dbReference type="GO" id="GO:0019322">
    <property type="term" value="P:pentose biosynthetic process"/>
    <property type="evidence" value="ECO:0007669"/>
    <property type="project" value="Ensembl"/>
</dbReference>
<dbReference type="GO" id="GO:0009051">
    <property type="term" value="P:pentose-phosphate shunt, oxidative branch"/>
    <property type="evidence" value="ECO:0007669"/>
    <property type="project" value="Ensembl"/>
</dbReference>
<dbReference type="GO" id="GO:0046390">
    <property type="term" value="P:ribose phosphate biosynthetic process"/>
    <property type="evidence" value="ECO:0007669"/>
    <property type="project" value="Ensembl"/>
</dbReference>
<dbReference type="FunFam" id="3.30.360.10:FF:000013">
    <property type="entry name" value="Glucose-6-phosphate 1-dehydrogenase"/>
    <property type="match status" value="1"/>
</dbReference>
<dbReference type="FunFam" id="3.40.50.720:FF:000111">
    <property type="entry name" value="Glucose-6-phosphate 1-dehydrogenase"/>
    <property type="match status" value="1"/>
</dbReference>
<dbReference type="Gene3D" id="3.30.360.10">
    <property type="entry name" value="Dihydrodipicolinate Reductase, domain 2"/>
    <property type="match status" value="1"/>
</dbReference>
<dbReference type="Gene3D" id="3.40.50.720">
    <property type="entry name" value="NAD(P)-binding Rossmann-like Domain"/>
    <property type="match status" value="1"/>
</dbReference>
<dbReference type="HAMAP" id="MF_00966">
    <property type="entry name" value="G6PD"/>
    <property type="match status" value="1"/>
</dbReference>
<dbReference type="InterPro" id="IPR001282">
    <property type="entry name" value="G6P_DH"/>
</dbReference>
<dbReference type="InterPro" id="IPR019796">
    <property type="entry name" value="G6P_DH_AS"/>
</dbReference>
<dbReference type="InterPro" id="IPR022675">
    <property type="entry name" value="G6P_DH_C"/>
</dbReference>
<dbReference type="InterPro" id="IPR022674">
    <property type="entry name" value="G6P_DH_NAD-bd"/>
</dbReference>
<dbReference type="InterPro" id="IPR036291">
    <property type="entry name" value="NAD(P)-bd_dom_sf"/>
</dbReference>
<dbReference type="NCBIfam" id="TIGR00871">
    <property type="entry name" value="zwf"/>
    <property type="match status" value="1"/>
</dbReference>
<dbReference type="PANTHER" id="PTHR23429:SF0">
    <property type="entry name" value="GLUCOSE-6-PHOSPHATE 1-DEHYDROGENASE"/>
    <property type="match status" value="1"/>
</dbReference>
<dbReference type="PANTHER" id="PTHR23429">
    <property type="entry name" value="GLUCOSE-6-PHOSPHATE 1-DEHYDROGENASE G6PD"/>
    <property type="match status" value="1"/>
</dbReference>
<dbReference type="Pfam" id="PF02781">
    <property type="entry name" value="G6PD_C"/>
    <property type="match status" value="1"/>
</dbReference>
<dbReference type="Pfam" id="PF00479">
    <property type="entry name" value="G6PD_N"/>
    <property type="match status" value="1"/>
</dbReference>
<dbReference type="PIRSF" id="PIRSF000110">
    <property type="entry name" value="G6PD"/>
    <property type="match status" value="1"/>
</dbReference>
<dbReference type="PRINTS" id="PR00079">
    <property type="entry name" value="G6PDHDRGNASE"/>
</dbReference>
<dbReference type="SUPFAM" id="SSF55347">
    <property type="entry name" value="Glyceraldehyde-3-phosphate dehydrogenase-like, C-terminal domain"/>
    <property type="match status" value="1"/>
</dbReference>
<dbReference type="SUPFAM" id="SSF51735">
    <property type="entry name" value="NAD(P)-binding Rossmann-fold domains"/>
    <property type="match status" value="1"/>
</dbReference>
<dbReference type="PROSITE" id="PS00069">
    <property type="entry name" value="G6P_DEHYDROGENASE"/>
    <property type="match status" value="1"/>
</dbReference>
<proteinExistence type="evidence at transcript level"/>
<gene>
    <name type="primary">G6PD</name>
</gene>